<gene>
    <name evidence="1" type="primary">flgH</name>
    <name type="ordered locus">PLES_42381</name>
</gene>
<feature type="signal peptide" evidence="1">
    <location>
        <begin position="1"/>
        <end position="18"/>
    </location>
</feature>
<feature type="chain" id="PRO_1000123954" description="Flagellar L-ring protein">
    <location>
        <begin position="19"/>
        <end position="231"/>
    </location>
</feature>
<feature type="region of interest" description="Disordered" evidence="2">
    <location>
        <begin position="118"/>
        <end position="141"/>
    </location>
</feature>
<feature type="lipid moiety-binding region" description="N-palmitoyl cysteine" evidence="1">
    <location>
        <position position="19"/>
    </location>
</feature>
<feature type="lipid moiety-binding region" description="S-diacylglycerol cysteine" evidence="1">
    <location>
        <position position="19"/>
    </location>
</feature>
<reference key="1">
    <citation type="journal article" date="2009" name="Genome Res.">
        <title>Newly introduced genomic prophage islands are critical determinants of in vivo competitiveness in the Liverpool epidemic strain of Pseudomonas aeruginosa.</title>
        <authorList>
            <person name="Winstanley C."/>
            <person name="Langille M.G.I."/>
            <person name="Fothergill J.L."/>
            <person name="Kukavica-Ibrulj I."/>
            <person name="Paradis-Bleau C."/>
            <person name="Sanschagrin F."/>
            <person name="Thomson N.R."/>
            <person name="Winsor G.L."/>
            <person name="Quail M.A."/>
            <person name="Lennard N."/>
            <person name="Bignell A."/>
            <person name="Clarke L."/>
            <person name="Seeger K."/>
            <person name="Saunders D."/>
            <person name="Harris D."/>
            <person name="Parkhill J."/>
            <person name="Hancock R.E.W."/>
            <person name="Brinkman F.S.L."/>
            <person name="Levesque R.C."/>
        </authorList>
    </citation>
    <scope>NUCLEOTIDE SEQUENCE [LARGE SCALE GENOMIC DNA]</scope>
    <source>
        <strain>LESB58</strain>
    </source>
</reference>
<comment type="function">
    <text evidence="1">Assembles around the rod to form the L-ring and probably protects the motor/basal body from shearing forces during rotation.</text>
</comment>
<comment type="subunit">
    <text evidence="1">The basal body constitutes a major portion of the flagellar organelle and consists of four rings (L,P,S, and M) mounted on a central rod.</text>
</comment>
<comment type="subcellular location">
    <subcellularLocation>
        <location evidence="1">Cell outer membrane</location>
        <topology evidence="1">Lipid-anchor</topology>
    </subcellularLocation>
    <subcellularLocation>
        <location evidence="1">Bacterial flagellum basal body</location>
    </subcellularLocation>
</comment>
<comment type="similarity">
    <text evidence="1">Belongs to the FlgH family.</text>
</comment>
<keyword id="KW-0975">Bacterial flagellum</keyword>
<keyword id="KW-0998">Cell outer membrane</keyword>
<keyword id="KW-0449">Lipoprotein</keyword>
<keyword id="KW-0472">Membrane</keyword>
<keyword id="KW-0564">Palmitate</keyword>
<keyword id="KW-0732">Signal</keyword>
<dbReference type="EMBL" id="FM209186">
    <property type="protein sequence ID" value="CAW28993.1"/>
    <property type="molecule type" value="Genomic_DNA"/>
</dbReference>
<dbReference type="RefSeq" id="WP_003082166.1">
    <property type="nucleotide sequence ID" value="NC_011770.1"/>
</dbReference>
<dbReference type="SMR" id="B7UXA6"/>
<dbReference type="KEGG" id="pag:PLES_42381"/>
<dbReference type="HOGENOM" id="CLU_069313_0_2_6"/>
<dbReference type="GO" id="GO:0009427">
    <property type="term" value="C:bacterial-type flagellum basal body, distal rod, L ring"/>
    <property type="evidence" value="ECO:0007669"/>
    <property type="project" value="InterPro"/>
</dbReference>
<dbReference type="GO" id="GO:0009279">
    <property type="term" value="C:cell outer membrane"/>
    <property type="evidence" value="ECO:0007669"/>
    <property type="project" value="UniProtKB-SubCell"/>
</dbReference>
<dbReference type="GO" id="GO:0003774">
    <property type="term" value="F:cytoskeletal motor activity"/>
    <property type="evidence" value="ECO:0007669"/>
    <property type="project" value="InterPro"/>
</dbReference>
<dbReference type="GO" id="GO:0071973">
    <property type="term" value="P:bacterial-type flagellum-dependent cell motility"/>
    <property type="evidence" value="ECO:0007669"/>
    <property type="project" value="InterPro"/>
</dbReference>
<dbReference type="HAMAP" id="MF_00415">
    <property type="entry name" value="FlgH"/>
    <property type="match status" value="1"/>
</dbReference>
<dbReference type="InterPro" id="IPR000527">
    <property type="entry name" value="Flag_Lring"/>
</dbReference>
<dbReference type="NCBIfam" id="NF001304">
    <property type="entry name" value="PRK00249.1-4"/>
    <property type="match status" value="1"/>
</dbReference>
<dbReference type="PANTHER" id="PTHR34933">
    <property type="entry name" value="FLAGELLAR L-RING PROTEIN"/>
    <property type="match status" value="1"/>
</dbReference>
<dbReference type="PANTHER" id="PTHR34933:SF1">
    <property type="entry name" value="FLAGELLAR L-RING PROTEIN"/>
    <property type="match status" value="1"/>
</dbReference>
<dbReference type="Pfam" id="PF02107">
    <property type="entry name" value="FlgH"/>
    <property type="match status" value="1"/>
</dbReference>
<dbReference type="PRINTS" id="PR01008">
    <property type="entry name" value="FLGLRINGFLGH"/>
</dbReference>
<dbReference type="PROSITE" id="PS51257">
    <property type="entry name" value="PROKAR_LIPOPROTEIN"/>
    <property type="match status" value="1"/>
</dbReference>
<name>FLGH_PSEA8</name>
<accession>B7UXA6</accession>
<protein>
    <recommendedName>
        <fullName evidence="1">Flagellar L-ring protein</fullName>
    </recommendedName>
    <alternativeName>
        <fullName evidence="1">Basal body L-ring protein</fullName>
    </alternativeName>
</protein>
<evidence type="ECO:0000255" key="1">
    <source>
        <dbReference type="HAMAP-Rule" id="MF_00415"/>
    </source>
</evidence>
<evidence type="ECO:0000256" key="2">
    <source>
        <dbReference type="SAM" id="MobiDB-lite"/>
    </source>
</evidence>
<proteinExistence type="inferred from homology"/>
<sequence>MNRLMIVSLLGIATALGGCVNPPPKPNDPYYAPVLPRTPLPAAQNNGAIYQAGFEQNLYDDRKAFRVGDIITITLNEKTQASKKANSDIQKDSKTKMGLTSLFGSGMTTNNPIGGGDLSLSAEYGGSRDAKGDSQAGQSNSLTGSITVTVAEVLPNGILSVRGEKWMTLNTGNELVRIAGLVRADDIATDNTVSSTRVADARITYSGTGAFADASQPGWLDRFFLSPLWPF</sequence>
<organism>
    <name type="scientific">Pseudomonas aeruginosa (strain LESB58)</name>
    <dbReference type="NCBI Taxonomy" id="557722"/>
    <lineage>
        <taxon>Bacteria</taxon>
        <taxon>Pseudomonadati</taxon>
        <taxon>Pseudomonadota</taxon>
        <taxon>Gammaproteobacteria</taxon>
        <taxon>Pseudomonadales</taxon>
        <taxon>Pseudomonadaceae</taxon>
        <taxon>Pseudomonas</taxon>
    </lineage>
</organism>